<feature type="chain" id="PRO_0000386618" description="Dolichyl-diphosphooligosaccharide--protein glycosyltransferase subunit 4">
    <location>
        <begin position="1"/>
        <end position="40"/>
    </location>
</feature>
<feature type="topological domain" description="Lumenal" evidence="4">
    <location>
        <begin position="1"/>
        <end position="4"/>
    </location>
</feature>
<feature type="transmembrane region" description="Helical" evidence="4">
    <location>
        <begin position="5"/>
        <end position="25"/>
    </location>
</feature>
<feature type="topological domain" description="Cytoplasmic" evidence="4">
    <location>
        <begin position="26"/>
        <end position="40"/>
    </location>
</feature>
<comment type="function">
    <text evidence="2">Subunit of the oligosaccharyl transferase (OST) complex that catalyzes the initial transfer of a defined glycan (Glc(3)Man(9)GlcNAc(2) in eukaryotes) from the lipid carrier dolichol-pyrophosphate to an asparagine residue within an Asn-X-Ser/Thr consensus motif in nascent polypeptide chains, the first step in protein N-glycosylation. N-glycosylation occurs cotranslationally and the complex associates with the Sec61 complex at the channel-forming translocon complex that mediates protein translocation across the endoplasmic reticulum (ER). All subunits are required for a maximal enzyme activity.</text>
</comment>
<comment type="subunit">
    <text evidence="2">Component of the oligosaccharyltransferase (OST) complex.</text>
</comment>
<comment type="subcellular location">
    <subcellularLocation>
        <location evidence="1">Endoplasmic reticulum membrane</location>
        <topology evidence="1">Single-pass type III membrane protein</topology>
    </subcellularLocation>
</comment>
<comment type="similarity">
    <text evidence="4">Belongs to the OST4 family.</text>
</comment>
<proteinExistence type="inferred from homology"/>
<name>OST4_DROYA</name>
<organism>
    <name type="scientific">Drosophila yakuba</name>
    <name type="common">Fruit fly</name>
    <dbReference type="NCBI Taxonomy" id="7245"/>
    <lineage>
        <taxon>Eukaryota</taxon>
        <taxon>Metazoa</taxon>
        <taxon>Ecdysozoa</taxon>
        <taxon>Arthropoda</taxon>
        <taxon>Hexapoda</taxon>
        <taxon>Insecta</taxon>
        <taxon>Pterygota</taxon>
        <taxon>Neoptera</taxon>
        <taxon>Endopterygota</taxon>
        <taxon>Diptera</taxon>
        <taxon>Brachycera</taxon>
        <taxon>Muscomorpha</taxon>
        <taxon>Ephydroidea</taxon>
        <taxon>Drosophilidae</taxon>
        <taxon>Drosophila</taxon>
        <taxon>Sophophora</taxon>
    </lineage>
</organism>
<keyword id="KW-0256">Endoplasmic reticulum</keyword>
<keyword id="KW-0472">Membrane</keyword>
<keyword id="KW-0735">Signal-anchor</keyword>
<keyword id="KW-0812">Transmembrane</keyword>
<keyword id="KW-1133">Transmembrane helix</keyword>
<evidence type="ECO:0000250" key="1"/>
<evidence type="ECO:0000250" key="2">
    <source>
        <dbReference type="UniProtKB" id="P0C6T2"/>
    </source>
</evidence>
<evidence type="ECO:0000250" key="3">
    <source>
        <dbReference type="UniProtKB" id="Q99380"/>
    </source>
</evidence>
<evidence type="ECO:0000255" key="4"/>
<evidence type="ECO:0000312" key="5">
    <source>
        <dbReference type="EMBL" id="EDW89500.1"/>
    </source>
</evidence>
<protein>
    <recommendedName>
        <fullName evidence="3">Dolichyl-diphosphooligosaccharide--protein glycosyltransferase subunit 4</fullName>
    </recommendedName>
</protein>
<sequence length="40" mass="4354">MISDVQLAIFSNVLGVFLFLLVVAYHYINANTGKPSAKAK</sequence>
<dbReference type="EMBL" id="CM000157">
    <property type="protein sequence ID" value="EDW89500.1"/>
    <property type="molecule type" value="Genomic_DNA"/>
</dbReference>
<dbReference type="SMR" id="B4P417"/>
<dbReference type="EnsemblMetazoa" id="FBtr0268831">
    <property type="protein sequence ID" value="FBpp0267323"/>
    <property type="gene ID" value="FBgn0239538"/>
</dbReference>
<dbReference type="EnsemblMetazoa" id="XM_002089752.3">
    <property type="protein sequence ID" value="XP_002089788.1"/>
    <property type="gene ID" value="LOC6528753"/>
</dbReference>
<dbReference type="EnsemblMetazoa" id="XM_039371449.2">
    <property type="protein sequence ID" value="XP_039227383.1"/>
    <property type="gene ID" value="LOC6528753"/>
</dbReference>
<dbReference type="GeneID" id="6528753"/>
<dbReference type="KEGG" id="dya:Dyak_GE22313"/>
<dbReference type="eggNOG" id="ENOG502TACG">
    <property type="taxonomic scope" value="Eukaryota"/>
</dbReference>
<dbReference type="HOGENOM" id="CLU_186352_2_0_1"/>
<dbReference type="PhylomeDB" id="B4P417"/>
<dbReference type="Proteomes" id="UP000002282">
    <property type="component" value="Chromosome 2L"/>
</dbReference>
<dbReference type="GO" id="GO:0008250">
    <property type="term" value="C:oligosaccharyltransferase complex"/>
    <property type="evidence" value="ECO:0000250"/>
    <property type="project" value="UniProtKB"/>
</dbReference>
<dbReference type="GO" id="GO:0006487">
    <property type="term" value="P:protein N-linked glycosylation"/>
    <property type="evidence" value="ECO:0000250"/>
    <property type="project" value="UniProtKB"/>
</dbReference>
<dbReference type="GO" id="GO:0018279">
    <property type="term" value="P:protein N-linked glycosylation via asparagine"/>
    <property type="evidence" value="ECO:0007669"/>
    <property type="project" value="TreeGrafter"/>
</dbReference>
<dbReference type="InterPro" id="IPR018943">
    <property type="entry name" value="Oligosaccaryltransferase"/>
</dbReference>
<dbReference type="InterPro" id="IPR051307">
    <property type="entry name" value="OST4"/>
</dbReference>
<dbReference type="InterPro" id="IPR036330">
    <property type="entry name" value="Ost4p_sf"/>
</dbReference>
<dbReference type="PANTHER" id="PTHR48164">
    <property type="entry name" value="DOLICHYL-DIPHOSPHOOLIGOSACCHARIDE--PROTEIN GLYCOSYLTRANSFERASE SUBUNIT 4"/>
    <property type="match status" value="1"/>
</dbReference>
<dbReference type="PANTHER" id="PTHR48164:SF1">
    <property type="entry name" value="DOLICHYL-DIPHOSPHOOLIGOSACCHARIDE--PROTEIN GLYCOSYLTRANSFERASE SUBUNIT 4"/>
    <property type="match status" value="1"/>
</dbReference>
<dbReference type="Pfam" id="PF10215">
    <property type="entry name" value="Ost4"/>
    <property type="match status" value="1"/>
</dbReference>
<dbReference type="SUPFAM" id="SSF103464">
    <property type="entry name" value="Oligosaccharyltransferase subunit ost4p"/>
    <property type="match status" value="1"/>
</dbReference>
<gene>
    <name type="ORF">GE22313</name>
</gene>
<reference evidence="5" key="1">
    <citation type="journal article" date="2007" name="Nature">
        <title>Evolution of genes and genomes on the Drosophila phylogeny.</title>
        <authorList>
            <consortium name="Drosophila 12 genomes consortium"/>
        </authorList>
    </citation>
    <scope>NUCLEOTIDE SEQUENCE [LARGE SCALE GENOMIC DNA]</scope>
    <source>
        <strain evidence="5">Tai18E2 / Tucson 14021-0261.01</strain>
    </source>
</reference>
<accession>B4P417</accession>